<keyword id="KW-0007">Acetylation</keyword>
<keyword id="KW-0963">Cytoplasm</keyword>
<keyword id="KW-0396">Initiation factor</keyword>
<keyword id="KW-0648">Protein biosynthesis</keyword>
<keyword id="KW-1185">Reference proteome</keyword>
<protein>
    <recommendedName>
        <fullName evidence="1">Eukaryotic translation initiation factor 3 subunit F</fullName>
        <shortName evidence="1">eIF3f</shortName>
    </recommendedName>
    <alternativeName>
        <fullName evidence="1">eIF-3-epsilon</fullName>
    </alternativeName>
    <alternativeName>
        <fullName>eIF3 p32 subunit</fullName>
    </alternativeName>
</protein>
<proteinExistence type="evidence at protein level"/>
<dbReference type="EMBL" id="U54561">
    <property type="protein sequence ID" value="AAD03463.1"/>
    <property type="molecule type" value="mRNA"/>
</dbReference>
<dbReference type="EMBL" id="AF002109">
    <property type="protein sequence ID" value="AAB95284.1"/>
    <property type="molecule type" value="Genomic_DNA"/>
</dbReference>
<dbReference type="EMBL" id="CP002685">
    <property type="protein sequence ID" value="AEC09760.1"/>
    <property type="molecule type" value="Genomic_DNA"/>
</dbReference>
<dbReference type="EMBL" id="AY045824">
    <property type="protein sequence ID" value="AAK76498.1"/>
    <property type="molecule type" value="mRNA"/>
</dbReference>
<dbReference type="EMBL" id="AY062556">
    <property type="protein sequence ID" value="AAL32634.1"/>
    <property type="molecule type" value="mRNA"/>
</dbReference>
<dbReference type="EMBL" id="AY091363">
    <property type="protein sequence ID" value="AAM14302.1"/>
    <property type="molecule type" value="mRNA"/>
</dbReference>
<dbReference type="EMBL" id="AY093368">
    <property type="protein sequence ID" value="AAM13367.1"/>
    <property type="molecule type" value="mRNA"/>
</dbReference>
<dbReference type="PIR" id="H84823">
    <property type="entry name" value="H84823"/>
</dbReference>
<dbReference type="SMR" id="O04202"/>
<dbReference type="BioGRID" id="3925">
    <property type="interactions" value="74"/>
</dbReference>
<dbReference type="FunCoup" id="O04202">
    <property type="interactions" value="5077"/>
</dbReference>
<dbReference type="STRING" id="3702.O04202"/>
<dbReference type="MEROPS" id="M67.974"/>
<dbReference type="iPTMnet" id="O04202"/>
<dbReference type="PaxDb" id="3702-AT2G39990.1"/>
<dbReference type="ProteomicsDB" id="221939"/>
<dbReference type="EnsemblPlants" id="AT2G39990.1">
    <property type="protein sequence ID" value="AT2G39990.1"/>
    <property type="gene ID" value="AT2G39990"/>
</dbReference>
<dbReference type="Gramene" id="AT2G39990.1">
    <property type="protein sequence ID" value="AT2G39990.1"/>
    <property type="gene ID" value="AT2G39990"/>
</dbReference>
<dbReference type="KEGG" id="ath:AT2G39990"/>
<dbReference type="Araport" id="AT2G39990"/>
<dbReference type="TAIR" id="AT2G39990">
    <property type="gene designation" value="EIF2"/>
</dbReference>
<dbReference type="eggNOG" id="KOG2975">
    <property type="taxonomic scope" value="Eukaryota"/>
</dbReference>
<dbReference type="HOGENOM" id="CLU_027018_0_1_1"/>
<dbReference type="InParanoid" id="O04202"/>
<dbReference type="OMA" id="EYFVHFH"/>
<dbReference type="PhylomeDB" id="O04202"/>
<dbReference type="PRO" id="PR:O04202"/>
<dbReference type="Proteomes" id="UP000006548">
    <property type="component" value="Chromosome 2"/>
</dbReference>
<dbReference type="ExpressionAtlas" id="O04202">
    <property type="expression patterns" value="baseline and differential"/>
</dbReference>
<dbReference type="GO" id="GO:0005737">
    <property type="term" value="C:cytoplasm"/>
    <property type="evidence" value="ECO:0000314"/>
    <property type="project" value="UniProtKB"/>
</dbReference>
<dbReference type="GO" id="GO:0016282">
    <property type="term" value="C:eukaryotic 43S preinitiation complex"/>
    <property type="evidence" value="ECO:0007669"/>
    <property type="project" value="UniProtKB-UniRule"/>
</dbReference>
<dbReference type="GO" id="GO:0033290">
    <property type="term" value="C:eukaryotic 48S preinitiation complex"/>
    <property type="evidence" value="ECO:0007669"/>
    <property type="project" value="UniProtKB-UniRule"/>
</dbReference>
<dbReference type="GO" id="GO:0005852">
    <property type="term" value="C:eukaryotic translation initiation factor 3 complex"/>
    <property type="evidence" value="ECO:0007669"/>
    <property type="project" value="UniProtKB-UniRule"/>
</dbReference>
<dbReference type="GO" id="GO:0005794">
    <property type="term" value="C:Golgi apparatus"/>
    <property type="evidence" value="ECO:0007005"/>
    <property type="project" value="TAIR"/>
</dbReference>
<dbReference type="GO" id="GO:0005634">
    <property type="term" value="C:nucleus"/>
    <property type="evidence" value="ECO:0007005"/>
    <property type="project" value="TAIR"/>
</dbReference>
<dbReference type="GO" id="GO:0008237">
    <property type="term" value="F:metallopeptidase activity"/>
    <property type="evidence" value="ECO:0007669"/>
    <property type="project" value="InterPro"/>
</dbReference>
<dbReference type="GO" id="GO:0003743">
    <property type="term" value="F:translation initiation factor activity"/>
    <property type="evidence" value="ECO:0007669"/>
    <property type="project" value="UniProtKB-UniRule"/>
</dbReference>
<dbReference type="GO" id="GO:0031369">
    <property type="term" value="F:translation initiation factor binding"/>
    <property type="evidence" value="ECO:0007669"/>
    <property type="project" value="InterPro"/>
</dbReference>
<dbReference type="GO" id="GO:0009793">
    <property type="term" value="P:embryo development ending in seed dormancy"/>
    <property type="evidence" value="ECO:0000315"/>
    <property type="project" value="TAIR"/>
</dbReference>
<dbReference type="GO" id="GO:0001732">
    <property type="term" value="P:formation of cytoplasmic translation initiation complex"/>
    <property type="evidence" value="ECO:0007669"/>
    <property type="project" value="UniProtKB-UniRule"/>
</dbReference>
<dbReference type="GO" id="GO:0009846">
    <property type="term" value="P:pollen germination"/>
    <property type="evidence" value="ECO:0000315"/>
    <property type="project" value="TAIR"/>
</dbReference>
<dbReference type="GO" id="GO:0009744">
    <property type="term" value="P:response to sucrose"/>
    <property type="evidence" value="ECO:0000315"/>
    <property type="project" value="UniProtKB"/>
</dbReference>
<dbReference type="CDD" id="cd08064">
    <property type="entry name" value="MPN_eIF3f"/>
    <property type="match status" value="1"/>
</dbReference>
<dbReference type="FunFam" id="3.40.140.10:FF:000034">
    <property type="entry name" value="Eukaryotic translation initiation factor 3 subunit F"/>
    <property type="match status" value="1"/>
</dbReference>
<dbReference type="Gene3D" id="3.40.140.10">
    <property type="entry name" value="Cytidine Deaminase, domain 2"/>
    <property type="match status" value="1"/>
</dbReference>
<dbReference type="HAMAP" id="MF_03005">
    <property type="entry name" value="eIF3f"/>
    <property type="match status" value="1"/>
</dbReference>
<dbReference type="InterPro" id="IPR027531">
    <property type="entry name" value="eIF3f"/>
</dbReference>
<dbReference type="InterPro" id="IPR024969">
    <property type="entry name" value="EIF3F/CSN6-like_C"/>
</dbReference>
<dbReference type="InterPro" id="IPR000555">
    <property type="entry name" value="JAMM/MPN+_dom"/>
</dbReference>
<dbReference type="InterPro" id="IPR037518">
    <property type="entry name" value="MPN"/>
</dbReference>
<dbReference type="PANTHER" id="PTHR10540:SF6">
    <property type="entry name" value="EUKARYOTIC TRANSLATION INITIATION FACTOR 3 SUBUNIT F"/>
    <property type="match status" value="1"/>
</dbReference>
<dbReference type="PANTHER" id="PTHR10540">
    <property type="entry name" value="EUKARYOTIC TRANSLATION INITIATION FACTOR 3 SUBUNIT F-RELATED"/>
    <property type="match status" value="1"/>
</dbReference>
<dbReference type="Pfam" id="PF01398">
    <property type="entry name" value="JAB"/>
    <property type="match status" value="1"/>
</dbReference>
<dbReference type="Pfam" id="PF13012">
    <property type="entry name" value="MitMem_reg"/>
    <property type="match status" value="1"/>
</dbReference>
<dbReference type="SMART" id="SM00232">
    <property type="entry name" value="JAB_MPN"/>
    <property type="match status" value="1"/>
</dbReference>
<dbReference type="PROSITE" id="PS50249">
    <property type="entry name" value="MPN"/>
    <property type="match status" value="1"/>
</dbReference>
<sequence>MAATSEHTILQFVSPSSTASATTSVLTARIHPLVIFNVCDCFVRRPDSAERVIGTLLGSILPDGTVDIRNSYAVPHNESSDQVAVDIDYHHNMLASHLKVNSKETIVGWYSTGAGVNGGSSLIHDFYAREVPNPIHLTVDTGFTNGEGTIKAFVSSNLSLGDRQLVAHFQEIPVDLRMVDAERVGFDVLKATSVDKLPNDLEGMELTMERLLTLINDVYKYVDSVVGGQIAPDNNIGRFIADAVASLPKLPPQVFDNLVNDSLQDQLLLLYLSSITRTQLSLAEKLNTAAQML</sequence>
<reference key="1">
    <citation type="journal article" date="1997" name="J. Biol. Chem.">
        <title>Structure of cDNAs encoding human eukaryotic initiation factor 3 subunits. Possible roles in RNA binding and macromolecular assembly.</title>
        <authorList>
            <person name="Asano K."/>
            <person name="Vornlocher H.-P."/>
            <person name="Richter-Cook N.J."/>
            <person name="Merrick W.C."/>
            <person name="Hinnebusch A.G."/>
            <person name="Hershey J.W.B."/>
        </authorList>
    </citation>
    <scope>NUCLEOTIDE SEQUENCE [MRNA]</scope>
</reference>
<reference key="2">
    <citation type="journal article" date="1999" name="Nature">
        <title>Sequence and analysis of chromosome 2 of the plant Arabidopsis thaliana.</title>
        <authorList>
            <person name="Lin X."/>
            <person name="Kaul S."/>
            <person name="Rounsley S.D."/>
            <person name="Shea T.P."/>
            <person name="Benito M.-I."/>
            <person name="Town C.D."/>
            <person name="Fujii C.Y."/>
            <person name="Mason T.M."/>
            <person name="Bowman C.L."/>
            <person name="Barnstead M.E."/>
            <person name="Feldblyum T.V."/>
            <person name="Buell C.R."/>
            <person name="Ketchum K.A."/>
            <person name="Lee J.J."/>
            <person name="Ronning C.M."/>
            <person name="Koo H.L."/>
            <person name="Moffat K.S."/>
            <person name="Cronin L.A."/>
            <person name="Shen M."/>
            <person name="Pai G."/>
            <person name="Van Aken S."/>
            <person name="Umayam L."/>
            <person name="Tallon L.J."/>
            <person name="Gill J.E."/>
            <person name="Adams M.D."/>
            <person name="Carrera A.J."/>
            <person name="Creasy T.H."/>
            <person name="Goodman H.M."/>
            <person name="Somerville C.R."/>
            <person name="Copenhaver G.P."/>
            <person name="Preuss D."/>
            <person name="Nierman W.C."/>
            <person name="White O."/>
            <person name="Eisen J.A."/>
            <person name="Salzberg S.L."/>
            <person name="Fraser C.M."/>
            <person name="Venter J.C."/>
        </authorList>
    </citation>
    <scope>NUCLEOTIDE SEQUENCE [LARGE SCALE GENOMIC DNA]</scope>
    <source>
        <strain>cv. Columbia</strain>
    </source>
</reference>
<reference key="3">
    <citation type="journal article" date="2017" name="Plant J.">
        <title>Araport11: a complete reannotation of the Arabidopsis thaliana reference genome.</title>
        <authorList>
            <person name="Cheng C.Y."/>
            <person name="Krishnakumar V."/>
            <person name="Chan A.P."/>
            <person name="Thibaud-Nissen F."/>
            <person name="Schobel S."/>
            <person name="Town C.D."/>
        </authorList>
    </citation>
    <scope>GENOME REANNOTATION</scope>
    <source>
        <strain>cv. Columbia</strain>
    </source>
</reference>
<reference key="4">
    <citation type="journal article" date="2003" name="Science">
        <title>Empirical analysis of transcriptional activity in the Arabidopsis genome.</title>
        <authorList>
            <person name="Yamada K."/>
            <person name="Lim J."/>
            <person name="Dale J.M."/>
            <person name="Chen H."/>
            <person name="Shinn P."/>
            <person name="Palm C.J."/>
            <person name="Southwick A.M."/>
            <person name="Wu H.C."/>
            <person name="Kim C.J."/>
            <person name="Nguyen M."/>
            <person name="Pham P.K."/>
            <person name="Cheuk R.F."/>
            <person name="Karlin-Newmann G."/>
            <person name="Liu S.X."/>
            <person name="Lam B."/>
            <person name="Sakano H."/>
            <person name="Wu T."/>
            <person name="Yu G."/>
            <person name="Miranda M."/>
            <person name="Quach H.L."/>
            <person name="Tripp M."/>
            <person name="Chang C.H."/>
            <person name="Lee J.M."/>
            <person name="Toriumi M.J."/>
            <person name="Chan M.M."/>
            <person name="Tang C.C."/>
            <person name="Onodera C.S."/>
            <person name="Deng J.M."/>
            <person name="Akiyama K."/>
            <person name="Ansari Y."/>
            <person name="Arakawa T."/>
            <person name="Banh J."/>
            <person name="Banno F."/>
            <person name="Bowser L."/>
            <person name="Brooks S.Y."/>
            <person name="Carninci P."/>
            <person name="Chao Q."/>
            <person name="Choy N."/>
            <person name="Enju A."/>
            <person name="Goldsmith A.D."/>
            <person name="Gurjal M."/>
            <person name="Hansen N.F."/>
            <person name="Hayashizaki Y."/>
            <person name="Johnson-Hopson C."/>
            <person name="Hsuan V.W."/>
            <person name="Iida K."/>
            <person name="Karnes M."/>
            <person name="Khan S."/>
            <person name="Koesema E."/>
            <person name="Ishida J."/>
            <person name="Jiang P.X."/>
            <person name="Jones T."/>
            <person name="Kawai J."/>
            <person name="Kamiya A."/>
            <person name="Meyers C."/>
            <person name="Nakajima M."/>
            <person name="Narusaka M."/>
            <person name="Seki M."/>
            <person name="Sakurai T."/>
            <person name="Satou M."/>
            <person name="Tamse R."/>
            <person name="Vaysberg M."/>
            <person name="Wallender E.K."/>
            <person name="Wong C."/>
            <person name="Yamamura Y."/>
            <person name="Yuan S."/>
            <person name="Shinozaki K."/>
            <person name="Davis R.W."/>
            <person name="Theologis A."/>
            <person name="Ecker J.R."/>
        </authorList>
    </citation>
    <scope>NUCLEOTIDE SEQUENCE [LARGE SCALE MRNA]</scope>
    <source>
        <strain>cv. Columbia</strain>
    </source>
</reference>
<reference key="5">
    <citation type="journal article" date="2010" name="Plant J.">
        <title>The Arabidopsis eukaryotic translation initiation factor 3, subunit F (AteIF3f), is required for pollen germination and embryogenesis.</title>
        <authorList>
            <person name="Xia C."/>
            <person name="Wang Y.-J."/>
            <person name="Li W.-Q."/>
            <person name="Chen Y.-R."/>
            <person name="Deng Y."/>
            <person name="Zhang X.-Q."/>
            <person name="Chen L.-Q."/>
            <person name="Ye D."/>
        </authorList>
    </citation>
    <scope>FUNCTION</scope>
    <scope>DISRUPTION PHENOTYPE</scope>
    <scope>TISSUE SPECIFICITY</scope>
    <scope>INTERACTION WITH TIF3E1 AND TIF3H1</scope>
    <scope>SUBCELLULAR LOCATION</scope>
    <source>
        <strain>cv. Landsberg erecta</strain>
        <strain>cv. Wassilewskija</strain>
    </source>
</reference>
<reference key="6">
    <citation type="journal article" date="2012" name="Mol. Cell. Proteomics">
        <title>Comparative large-scale characterisation of plant vs. mammal proteins reveals similar and idiosyncratic N-alpha acetylation features.</title>
        <authorList>
            <person name="Bienvenut W.V."/>
            <person name="Sumpton D."/>
            <person name="Martinez A."/>
            <person name="Lilla S."/>
            <person name="Espagne C."/>
            <person name="Meinnel T."/>
            <person name="Giglione C."/>
        </authorList>
    </citation>
    <scope>ACETYLATION [LARGE SCALE ANALYSIS] AT ALA-2</scope>
    <scope>CLEAVAGE OF INITIATOR METHIONINE [LARGE SCALE ANALYSIS]</scope>
    <scope>IDENTIFICATION BY MASS SPECTROMETRY [LARGE SCALE ANALYSIS]</scope>
</reference>
<comment type="function">
    <text evidence="1 3">Component of the eukaryotic translation initiation factor 3 (eIF-3) complex, which is involved in protein synthesis of a specialized repertoire of mRNAs and, together with other initiation factors, stimulates binding of mRNA and methionyl-tRNAi to the 40S ribosome. The eIF-3 complex specifically targets and initiates translation of a subset of mRNAs involved in cell proliferation (Potential). Involved in cell growth and differentiation, especially during embryogenesis and male gametophyte germination (PubMed:20444226). Regulates sensitivity to sugars (e.g. sucrose) (PubMed:20444226).</text>
</comment>
<comment type="subunit">
    <text evidence="1 3">Component of the eukaryotic translation initiation factor 3 (eIF-3) complex. Binds to TIF3E1 and TIF3H1 (PubMed:20444226).</text>
</comment>
<comment type="subcellular location">
    <subcellularLocation>
        <location evidence="1 3">Cytoplasm</location>
    </subcellularLocation>
</comment>
<comment type="tissue specificity">
    <text evidence="3">Expressed in inflorescences, leaves, stems, siliques, roots and seedlings. Accumulates at highly levels in pollen grains, developing embryos and root tips.</text>
</comment>
<comment type="disruption phenotype">
    <text evidence="3">Male gametophyte-defective. Disrupted pollen germination and embryo development. Hypersensitivity to exogenous sucrose.</text>
</comment>
<comment type="similarity">
    <text evidence="1">Belongs to the eIF-3 subunit F family.</text>
</comment>
<evidence type="ECO:0000255" key="1">
    <source>
        <dbReference type="HAMAP-Rule" id="MF_03005"/>
    </source>
</evidence>
<evidence type="ECO:0000255" key="2">
    <source>
        <dbReference type="PROSITE-ProRule" id="PRU01182"/>
    </source>
</evidence>
<evidence type="ECO:0000269" key="3">
    <source>
    </source>
</evidence>
<evidence type="ECO:0000305" key="4"/>
<evidence type="ECO:0007744" key="5">
    <source>
    </source>
</evidence>
<accession>O04202</accession>
<accession>Q8W4H4</accession>
<name>EIF3F_ARATH</name>
<gene>
    <name type="primary">TIF3F1</name>
    <name type="ordered locus">At2g39990</name>
    <name type="ORF">T29M21.15</name>
</gene>
<feature type="initiator methionine" description="Removed" evidence="5">
    <location>
        <position position="1"/>
    </location>
</feature>
<feature type="chain" id="PRO_0000213966" description="Eukaryotic translation initiation factor 3 subunit F">
    <location>
        <begin position="2"/>
        <end position="293"/>
    </location>
</feature>
<feature type="domain" description="MPN" evidence="2">
    <location>
        <begin position="28"/>
        <end position="159"/>
    </location>
</feature>
<feature type="modified residue" description="N-acetylalanine" evidence="5">
    <location>
        <position position="2"/>
    </location>
</feature>
<feature type="sequence conflict" description="In Ref. 4; AAL32634/AAM13367." evidence="4" ref="4">
    <original>D</original>
    <variation>N</variation>
    <location>
        <position position="261"/>
    </location>
</feature>
<organism>
    <name type="scientific">Arabidopsis thaliana</name>
    <name type="common">Mouse-ear cress</name>
    <dbReference type="NCBI Taxonomy" id="3702"/>
    <lineage>
        <taxon>Eukaryota</taxon>
        <taxon>Viridiplantae</taxon>
        <taxon>Streptophyta</taxon>
        <taxon>Embryophyta</taxon>
        <taxon>Tracheophyta</taxon>
        <taxon>Spermatophyta</taxon>
        <taxon>Magnoliopsida</taxon>
        <taxon>eudicotyledons</taxon>
        <taxon>Gunneridae</taxon>
        <taxon>Pentapetalae</taxon>
        <taxon>rosids</taxon>
        <taxon>malvids</taxon>
        <taxon>Brassicales</taxon>
        <taxon>Brassicaceae</taxon>
        <taxon>Camelineae</taxon>
        <taxon>Arabidopsis</taxon>
    </lineage>
</organism>